<feature type="chain" id="PRO_0000363303" description="Probable protein phosphatase 2C 56">
    <location>
        <begin position="1"/>
        <end position="352"/>
    </location>
</feature>
<feature type="domain" description="PPM-type phosphatase" evidence="2">
    <location>
        <begin position="96"/>
        <end position="343"/>
    </location>
</feature>
<feature type="region of interest" description="Disordered" evidence="3">
    <location>
        <begin position="18"/>
        <end position="37"/>
    </location>
</feature>
<feature type="region of interest" description="Disordered" evidence="3">
    <location>
        <begin position="53"/>
        <end position="87"/>
    </location>
</feature>
<feature type="compositionally biased region" description="Low complexity" evidence="3">
    <location>
        <begin position="23"/>
        <end position="37"/>
    </location>
</feature>
<feature type="compositionally biased region" description="Low complexity" evidence="3">
    <location>
        <begin position="53"/>
        <end position="75"/>
    </location>
</feature>
<feature type="binding site" evidence="1">
    <location>
        <position position="132"/>
    </location>
    <ligand>
        <name>Mn(2+)</name>
        <dbReference type="ChEBI" id="CHEBI:29035"/>
        <label>1</label>
    </ligand>
</feature>
<feature type="binding site" evidence="1">
    <location>
        <position position="132"/>
    </location>
    <ligand>
        <name>Mn(2+)</name>
        <dbReference type="ChEBI" id="CHEBI:29035"/>
        <label>2</label>
    </ligand>
</feature>
<feature type="binding site" evidence="1">
    <location>
        <position position="133"/>
    </location>
    <ligand>
        <name>Mn(2+)</name>
        <dbReference type="ChEBI" id="CHEBI:29035"/>
        <label>1</label>
    </ligand>
</feature>
<feature type="binding site" evidence="1">
    <location>
        <position position="295"/>
    </location>
    <ligand>
        <name>Mn(2+)</name>
        <dbReference type="ChEBI" id="CHEBI:29035"/>
        <label>2</label>
    </ligand>
</feature>
<feature type="binding site" evidence="1">
    <location>
        <position position="334"/>
    </location>
    <ligand>
        <name>Mn(2+)</name>
        <dbReference type="ChEBI" id="CHEBI:29035"/>
        <label>2</label>
    </ligand>
</feature>
<sequence>MARAAGLRALVGIEAAGRGRRVAASPSPGGTPAASRGLPGWPGFCGVGCGSSSSSSFAPPRMQARRAAGSAARTRSPSQSNGWITGGSASEDGRLSWDYSSFKGRRPSMEDRFSIKMTTINEQTVSLFGVFDGHGGSLAAEYLKEHLFENLVNHPELLRDTKLAISQTFLKTDADFLESVSSNPFRDDGSTAVTAILVGNHLYVGNVGDSRVVALKAGKAVPLSEDHKPNRKDEQKRIEDAGGIVVFDDTWRVNGLLAMSRAFGNRALKHYVKAEPDIQEKVVDESLEYLILATDGLWDVMRNEDAVSLLKAQDGPKAAAMKLTEVAHSRLTLDNITCIVLQFHHGKSTNSN</sequence>
<dbReference type="EC" id="3.1.3.16"/>
<dbReference type="EMBL" id="AP004745">
    <property type="protein sequence ID" value="BAD54192.1"/>
    <property type="status" value="ALT_SEQ"/>
    <property type="molecule type" value="Genomic_DNA"/>
</dbReference>
<dbReference type="EMBL" id="AP005470">
    <property type="protein sequence ID" value="BAD46121.1"/>
    <property type="status" value="ALT_SEQ"/>
    <property type="molecule type" value="Genomic_DNA"/>
</dbReference>
<dbReference type="EMBL" id="AP008212">
    <property type="protein sequence ID" value="BAF19680.1"/>
    <property type="status" value="ALT_SEQ"/>
    <property type="molecule type" value="Genomic_DNA"/>
</dbReference>
<dbReference type="EMBL" id="AP014962">
    <property type="protein sequence ID" value="BAS98042.1"/>
    <property type="molecule type" value="Genomic_DNA"/>
</dbReference>
<dbReference type="EMBL" id="CM000143">
    <property type="status" value="NOT_ANNOTATED_CDS"/>
    <property type="molecule type" value="Genomic_DNA"/>
</dbReference>
<dbReference type="SMR" id="Q0DBU3"/>
<dbReference type="FunCoup" id="Q0DBU3">
    <property type="interactions" value="218"/>
</dbReference>
<dbReference type="STRING" id="39947.Q0DBU3"/>
<dbReference type="PaxDb" id="39947-Q0DBU3"/>
<dbReference type="EnsemblPlants" id="Os06t0526800-00">
    <property type="protein sequence ID" value="Os06t0526800-00"/>
    <property type="gene ID" value="Os06g0526800"/>
</dbReference>
<dbReference type="Gramene" id="Os06t0526800-00">
    <property type="protein sequence ID" value="Os06t0526800-00"/>
    <property type="gene ID" value="Os06g0526800"/>
</dbReference>
<dbReference type="KEGG" id="dosa:Os06g0526800"/>
<dbReference type="eggNOG" id="KOG0698">
    <property type="taxonomic scope" value="Eukaryota"/>
</dbReference>
<dbReference type="HOGENOM" id="CLU_013173_0_6_1"/>
<dbReference type="InParanoid" id="Q0DBU3"/>
<dbReference type="OMA" id="MNWENFK"/>
<dbReference type="Proteomes" id="UP000000763">
    <property type="component" value="Chromosome 6"/>
</dbReference>
<dbReference type="Proteomes" id="UP000007752">
    <property type="component" value="Chromosome 6"/>
</dbReference>
<dbReference type="Proteomes" id="UP000059680">
    <property type="component" value="Chromosome 6"/>
</dbReference>
<dbReference type="GO" id="GO:0046872">
    <property type="term" value="F:metal ion binding"/>
    <property type="evidence" value="ECO:0007669"/>
    <property type="project" value="UniProtKB-KW"/>
</dbReference>
<dbReference type="GO" id="GO:0004722">
    <property type="term" value="F:protein serine/threonine phosphatase activity"/>
    <property type="evidence" value="ECO:0007669"/>
    <property type="project" value="UniProtKB-EC"/>
</dbReference>
<dbReference type="GO" id="GO:0007165">
    <property type="term" value="P:signal transduction"/>
    <property type="evidence" value="ECO:0000318"/>
    <property type="project" value="GO_Central"/>
</dbReference>
<dbReference type="CDD" id="cd00143">
    <property type="entry name" value="PP2Cc"/>
    <property type="match status" value="1"/>
</dbReference>
<dbReference type="FunFam" id="3.60.40.10:FF:000027">
    <property type="entry name" value="Probable protein phosphatase 2C 76"/>
    <property type="match status" value="1"/>
</dbReference>
<dbReference type="Gene3D" id="3.60.40.10">
    <property type="entry name" value="PPM-type phosphatase domain"/>
    <property type="match status" value="1"/>
</dbReference>
<dbReference type="InterPro" id="IPR015655">
    <property type="entry name" value="PP2C"/>
</dbReference>
<dbReference type="InterPro" id="IPR000222">
    <property type="entry name" value="PP2C_BS"/>
</dbReference>
<dbReference type="InterPro" id="IPR036457">
    <property type="entry name" value="PPM-type-like_dom_sf"/>
</dbReference>
<dbReference type="InterPro" id="IPR001932">
    <property type="entry name" value="PPM-type_phosphatase-like_dom"/>
</dbReference>
<dbReference type="PANTHER" id="PTHR47992">
    <property type="entry name" value="PROTEIN PHOSPHATASE"/>
    <property type="match status" value="1"/>
</dbReference>
<dbReference type="Pfam" id="PF00481">
    <property type="entry name" value="PP2C"/>
    <property type="match status" value="1"/>
</dbReference>
<dbReference type="SMART" id="SM00332">
    <property type="entry name" value="PP2Cc"/>
    <property type="match status" value="1"/>
</dbReference>
<dbReference type="SUPFAM" id="SSF81606">
    <property type="entry name" value="PP2C-like"/>
    <property type="match status" value="1"/>
</dbReference>
<dbReference type="PROSITE" id="PS01032">
    <property type="entry name" value="PPM_1"/>
    <property type="match status" value="1"/>
</dbReference>
<dbReference type="PROSITE" id="PS51746">
    <property type="entry name" value="PPM_2"/>
    <property type="match status" value="1"/>
</dbReference>
<name>P2C56_ORYSJ</name>
<proteinExistence type="inferred from homology"/>
<protein>
    <recommendedName>
        <fullName>Probable protein phosphatase 2C 56</fullName>
        <shortName>OsPP2C56</shortName>
        <ecNumber>3.1.3.16</ecNumber>
    </recommendedName>
</protein>
<reference key="1">
    <citation type="journal article" date="2005" name="Nature">
        <title>The map-based sequence of the rice genome.</title>
        <authorList>
            <consortium name="International rice genome sequencing project (IRGSP)"/>
        </authorList>
    </citation>
    <scope>NUCLEOTIDE SEQUENCE [LARGE SCALE GENOMIC DNA]</scope>
    <source>
        <strain>cv. Nipponbare</strain>
    </source>
</reference>
<reference key="2">
    <citation type="journal article" date="2008" name="Nucleic Acids Res.">
        <title>The rice annotation project database (RAP-DB): 2008 update.</title>
        <authorList>
            <consortium name="The rice annotation project (RAP)"/>
        </authorList>
    </citation>
    <scope>GENOME REANNOTATION</scope>
    <source>
        <strain>cv. Nipponbare</strain>
    </source>
</reference>
<reference key="3">
    <citation type="journal article" date="2013" name="Rice">
        <title>Improvement of the Oryza sativa Nipponbare reference genome using next generation sequence and optical map data.</title>
        <authorList>
            <person name="Kawahara Y."/>
            <person name="de la Bastide M."/>
            <person name="Hamilton J.P."/>
            <person name="Kanamori H."/>
            <person name="McCombie W.R."/>
            <person name="Ouyang S."/>
            <person name="Schwartz D.C."/>
            <person name="Tanaka T."/>
            <person name="Wu J."/>
            <person name="Zhou S."/>
            <person name="Childs K.L."/>
            <person name="Davidson R.M."/>
            <person name="Lin H."/>
            <person name="Quesada-Ocampo L."/>
            <person name="Vaillancourt B."/>
            <person name="Sakai H."/>
            <person name="Lee S.S."/>
            <person name="Kim J."/>
            <person name="Numa H."/>
            <person name="Itoh T."/>
            <person name="Buell C.R."/>
            <person name="Matsumoto T."/>
        </authorList>
    </citation>
    <scope>GENOME REANNOTATION</scope>
    <source>
        <strain>cv. Nipponbare</strain>
    </source>
</reference>
<reference key="4">
    <citation type="journal article" date="2005" name="PLoS Biol.">
        <title>The genomes of Oryza sativa: a history of duplications.</title>
        <authorList>
            <person name="Yu J."/>
            <person name="Wang J."/>
            <person name="Lin W."/>
            <person name="Li S."/>
            <person name="Li H."/>
            <person name="Zhou J."/>
            <person name="Ni P."/>
            <person name="Dong W."/>
            <person name="Hu S."/>
            <person name="Zeng C."/>
            <person name="Zhang J."/>
            <person name="Zhang Y."/>
            <person name="Li R."/>
            <person name="Xu Z."/>
            <person name="Li S."/>
            <person name="Li X."/>
            <person name="Zheng H."/>
            <person name="Cong L."/>
            <person name="Lin L."/>
            <person name="Yin J."/>
            <person name="Geng J."/>
            <person name="Li G."/>
            <person name="Shi J."/>
            <person name="Liu J."/>
            <person name="Lv H."/>
            <person name="Li J."/>
            <person name="Wang J."/>
            <person name="Deng Y."/>
            <person name="Ran L."/>
            <person name="Shi X."/>
            <person name="Wang X."/>
            <person name="Wu Q."/>
            <person name="Li C."/>
            <person name="Ren X."/>
            <person name="Wang J."/>
            <person name="Wang X."/>
            <person name="Li D."/>
            <person name="Liu D."/>
            <person name="Zhang X."/>
            <person name="Ji Z."/>
            <person name="Zhao W."/>
            <person name="Sun Y."/>
            <person name="Zhang Z."/>
            <person name="Bao J."/>
            <person name="Han Y."/>
            <person name="Dong L."/>
            <person name="Ji J."/>
            <person name="Chen P."/>
            <person name="Wu S."/>
            <person name="Liu J."/>
            <person name="Xiao Y."/>
            <person name="Bu D."/>
            <person name="Tan J."/>
            <person name="Yang L."/>
            <person name="Ye C."/>
            <person name="Zhang J."/>
            <person name="Xu J."/>
            <person name="Zhou Y."/>
            <person name="Yu Y."/>
            <person name="Zhang B."/>
            <person name="Zhuang S."/>
            <person name="Wei H."/>
            <person name="Liu B."/>
            <person name="Lei M."/>
            <person name="Yu H."/>
            <person name="Li Y."/>
            <person name="Xu H."/>
            <person name="Wei S."/>
            <person name="He X."/>
            <person name="Fang L."/>
            <person name="Zhang Z."/>
            <person name="Zhang Y."/>
            <person name="Huang X."/>
            <person name="Su Z."/>
            <person name="Tong W."/>
            <person name="Li J."/>
            <person name="Tong Z."/>
            <person name="Li S."/>
            <person name="Ye J."/>
            <person name="Wang L."/>
            <person name="Fang L."/>
            <person name="Lei T."/>
            <person name="Chen C.-S."/>
            <person name="Chen H.-C."/>
            <person name="Xu Z."/>
            <person name="Li H."/>
            <person name="Huang H."/>
            <person name="Zhang F."/>
            <person name="Xu H."/>
            <person name="Li N."/>
            <person name="Zhao C."/>
            <person name="Li S."/>
            <person name="Dong L."/>
            <person name="Huang Y."/>
            <person name="Li L."/>
            <person name="Xi Y."/>
            <person name="Qi Q."/>
            <person name="Li W."/>
            <person name="Zhang B."/>
            <person name="Hu W."/>
            <person name="Zhang Y."/>
            <person name="Tian X."/>
            <person name="Jiao Y."/>
            <person name="Liang X."/>
            <person name="Jin J."/>
            <person name="Gao L."/>
            <person name="Zheng W."/>
            <person name="Hao B."/>
            <person name="Liu S.-M."/>
            <person name="Wang W."/>
            <person name="Yuan L."/>
            <person name="Cao M."/>
            <person name="McDermott J."/>
            <person name="Samudrala R."/>
            <person name="Wang J."/>
            <person name="Wong G.K.-S."/>
            <person name="Yang H."/>
        </authorList>
    </citation>
    <scope>NUCLEOTIDE SEQUENCE [LARGE SCALE GENOMIC DNA]</scope>
    <source>
        <strain>cv. Nipponbare</strain>
    </source>
</reference>
<reference key="5">
    <citation type="journal article" date="2008" name="BMC Genomics">
        <title>Genome-wide and expression analysis of protein phosphatase 2C in rice and Arabidopsis.</title>
        <authorList>
            <person name="Xue T."/>
            <person name="Wang D."/>
            <person name="Zhang S."/>
            <person name="Ehlting J."/>
            <person name="Ni F."/>
            <person name="Jacab S."/>
            <person name="Zheng C."/>
            <person name="Zhong Y."/>
        </authorList>
    </citation>
    <scope>GENE FAMILY</scope>
    <scope>NOMENCLATURE</scope>
</reference>
<gene>
    <name type="ordered locus">Os06g0526800</name>
    <name type="ordered locus">Os06g0526950</name>
    <name type="ordered locus">LOC_Os06g33549</name>
    <name type="ORF">OsJ_020684</name>
    <name type="ORF">OSJNBa0043B22.28</name>
    <name type="ORF">P0001B01.8</name>
</gene>
<keyword id="KW-0378">Hydrolase</keyword>
<keyword id="KW-0460">Magnesium</keyword>
<keyword id="KW-0464">Manganese</keyword>
<keyword id="KW-0479">Metal-binding</keyword>
<keyword id="KW-0904">Protein phosphatase</keyword>
<keyword id="KW-1185">Reference proteome</keyword>
<comment type="catalytic activity">
    <reaction>
        <text>O-phospho-L-seryl-[protein] + H2O = L-seryl-[protein] + phosphate</text>
        <dbReference type="Rhea" id="RHEA:20629"/>
        <dbReference type="Rhea" id="RHEA-COMP:9863"/>
        <dbReference type="Rhea" id="RHEA-COMP:11604"/>
        <dbReference type="ChEBI" id="CHEBI:15377"/>
        <dbReference type="ChEBI" id="CHEBI:29999"/>
        <dbReference type="ChEBI" id="CHEBI:43474"/>
        <dbReference type="ChEBI" id="CHEBI:83421"/>
        <dbReference type="EC" id="3.1.3.16"/>
    </reaction>
</comment>
<comment type="catalytic activity">
    <reaction>
        <text>O-phospho-L-threonyl-[protein] + H2O = L-threonyl-[protein] + phosphate</text>
        <dbReference type="Rhea" id="RHEA:47004"/>
        <dbReference type="Rhea" id="RHEA-COMP:11060"/>
        <dbReference type="Rhea" id="RHEA-COMP:11605"/>
        <dbReference type="ChEBI" id="CHEBI:15377"/>
        <dbReference type="ChEBI" id="CHEBI:30013"/>
        <dbReference type="ChEBI" id="CHEBI:43474"/>
        <dbReference type="ChEBI" id="CHEBI:61977"/>
        <dbReference type="EC" id="3.1.3.16"/>
    </reaction>
</comment>
<comment type="cofactor">
    <cofactor evidence="1">
        <name>Mg(2+)</name>
        <dbReference type="ChEBI" id="CHEBI:18420"/>
    </cofactor>
    <cofactor evidence="1">
        <name>Mn(2+)</name>
        <dbReference type="ChEBI" id="CHEBI:29035"/>
    </cofactor>
    <text evidence="1">Binds 2 magnesium or manganese ions per subunit.</text>
</comment>
<comment type="similarity">
    <text evidence="4">Belongs to the PP2C family.</text>
</comment>
<comment type="sequence caution" evidence="4">
    <conflict type="erroneous gene model prediction">
        <sequence resource="EMBL-CDS" id="BAD46121"/>
    </conflict>
</comment>
<comment type="sequence caution" evidence="4">
    <conflict type="erroneous gene model prediction">
        <sequence resource="EMBL-CDS" id="BAD54192"/>
    </conflict>
</comment>
<comment type="sequence caution" evidence="4">
    <conflict type="erroneous gene model prediction">
        <sequence resource="EMBL-CDS" id="BAF19680"/>
    </conflict>
</comment>
<organism>
    <name type="scientific">Oryza sativa subsp. japonica</name>
    <name type="common">Rice</name>
    <dbReference type="NCBI Taxonomy" id="39947"/>
    <lineage>
        <taxon>Eukaryota</taxon>
        <taxon>Viridiplantae</taxon>
        <taxon>Streptophyta</taxon>
        <taxon>Embryophyta</taxon>
        <taxon>Tracheophyta</taxon>
        <taxon>Spermatophyta</taxon>
        <taxon>Magnoliopsida</taxon>
        <taxon>Liliopsida</taxon>
        <taxon>Poales</taxon>
        <taxon>Poaceae</taxon>
        <taxon>BOP clade</taxon>
        <taxon>Oryzoideae</taxon>
        <taxon>Oryzeae</taxon>
        <taxon>Oryzinae</taxon>
        <taxon>Oryza</taxon>
        <taxon>Oryza sativa</taxon>
    </lineage>
</organism>
<evidence type="ECO:0000250" key="1"/>
<evidence type="ECO:0000255" key="2">
    <source>
        <dbReference type="PROSITE-ProRule" id="PRU01082"/>
    </source>
</evidence>
<evidence type="ECO:0000256" key="3">
    <source>
        <dbReference type="SAM" id="MobiDB-lite"/>
    </source>
</evidence>
<evidence type="ECO:0000305" key="4"/>
<accession>Q0DBU3</accession>
<accession>A0A0P0WXD9</accession>
<accession>Q652Z6</accession>